<accession>A8GKI9</accession>
<evidence type="ECO:0000255" key="1">
    <source>
        <dbReference type="HAMAP-Rule" id="MF_00374"/>
    </source>
</evidence>
<evidence type="ECO:0000305" key="2"/>
<proteinExistence type="inferred from homology"/>
<comment type="similarity">
    <text evidence="1">Belongs to the universal ribosomal protein uL29 family.</text>
</comment>
<dbReference type="EMBL" id="CP000826">
    <property type="protein sequence ID" value="ABV43629.1"/>
    <property type="molecule type" value="Genomic_DNA"/>
</dbReference>
<dbReference type="SMR" id="A8GKI9"/>
<dbReference type="STRING" id="399741.Spro_4536"/>
<dbReference type="KEGG" id="spe:Spro_4536"/>
<dbReference type="eggNOG" id="COG0255">
    <property type="taxonomic scope" value="Bacteria"/>
</dbReference>
<dbReference type="HOGENOM" id="CLU_158491_1_2_6"/>
<dbReference type="OrthoDB" id="9815192at2"/>
<dbReference type="GO" id="GO:0022625">
    <property type="term" value="C:cytosolic large ribosomal subunit"/>
    <property type="evidence" value="ECO:0007669"/>
    <property type="project" value="TreeGrafter"/>
</dbReference>
<dbReference type="GO" id="GO:0003735">
    <property type="term" value="F:structural constituent of ribosome"/>
    <property type="evidence" value="ECO:0007669"/>
    <property type="project" value="InterPro"/>
</dbReference>
<dbReference type="GO" id="GO:0006412">
    <property type="term" value="P:translation"/>
    <property type="evidence" value="ECO:0007669"/>
    <property type="project" value="UniProtKB-UniRule"/>
</dbReference>
<dbReference type="CDD" id="cd00427">
    <property type="entry name" value="Ribosomal_L29_HIP"/>
    <property type="match status" value="1"/>
</dbReference>
<dbReference type="Gene3D" id="6.10.140.1970">
    <property type="match status" value="1"/>
</dbReference>
<dbReference type="HAMAP" id="MF_00374">
    <property type="entry name" value="Ribosomal_uL29"/>
    <property type="match status" value="1"/>
</dbReference>
<dbReference type="InterPro" id="IPR050063">
    <property type="entry name" value="Ribosomal_protein_uL29"/>
</dbReference>
<dbReference type="InterPro" id="IPR001854">
    <property type="entry name" value="Ribosomal_uL29"/>
</dbReference>
<dbReference type="InterPro" id="IPR018254">
    <property type="entry name" value="Ribosomal_uL29_CS"/>
</dbReference>
<dbReference type="InterPro" id="IPR036049">
    <property type="entry name" value="Ribosomal_uL29_sf"/>
</dbReference>
<dbReference type="NCBIfam" id="TIGR00012">
    <property type="entry name" value="L29"/>
    <property type="match status" value="1"/>
</dbReference>
<dbReference type="PANTHER" id="PTHR10916">
    <property type="entry name" value="60S RIBOSOMAL PROTEIN L35/50S RIBOSOMAL PROTEIN L29"/>
    <property type="match status" value="1"/>
</dbReference>
<dbReference type="PANTHER" id="PTHR10916:SF0">
    <property type="entry name" value="LARGE RIBOSOMAL SUBUNIT PROTEIN UL29C"/>
    <property type="match status" value="1"/>
</dbReference>
<dbReference type="Pfam" id="PF00831">
    <property type="entry name" value="Ribosomal_L29"/>
    <property type="match status" value="1"/>
</dbReference>
<dbReference type="SUPFAM" id="SSF46561">
    <property type="entry name" value="Ribosomal protein L29 (L29p)"/>
    <property type="match status" value="1"/>
</dbReference>
<dbReference type="PROSITE" id="PS00579">
    <property type="entry name" value="RIBOSOMAL_L29"/>
    <property type="match status" value="1"/>
</dbReference>
<protein>
    <recommendedName>
        <fullName evidence="1">Large ribosomal subunit protein uL29</fullName>
    </recommendedName>
    <alternativeName>
        <fullName evidence="2">50S ribosomal protein L29</fullName>
    </alternativeName>
</protein>
<gene>
    <name evidence="1" type="primary">rpmC</name>
    <name type="ordered locus">Spro_4536</name>
</gene>
<name>RL29_SERP5</name>
<feature type="chain" id="PRO_1000059973" description="Large ribosomal subunit protein uL29">
    <location>
        <begin position="1"/>
        <end position="63"/>
    </location>
</feature>
<sequence>MKAQELREKSVEELNTELLNLLREQFNLRMQAASGQLQQTHLLKQVRRNVARVKTLLTEKAGV</sequence>
<keyword id="KW-0687">Ribonucleoprotein</keyword>
<keyword id="KW-0689">Ribosomal protein</keyword>
<reference key="1">
    <citation type="submission" date="2007-09" db="EMBL/GenBank/DDBJ databases">
        <title>Complete sequence of chromosome of Serratia proteamaculans 568.</title>
        <authorList>
            <consortium name="US DOE Joint Genome Institute"/>
            <person name="Copeland A."/>
            <person name="Lucas S."/>
            <person name="Lapidus A."/>
            <person name="Barry K."/>
            <person name="Glavina del Rio T."/>
            <person name="Dalin E."/>
            <person name="Tice H."/>
            <person name="Pitluck S."/>
            <person name="Chain P."/>
            <person name="Malfatti S."/>
            <person name="Shin M."/>
            <person name="Vergez L."/>
            <person name="Schmutz J."/>
            <person name="Larimer F."/>
            <person name="Land M."/>
            <person name="Hauser L."/>
            <person name="Kyrpides N."/>
            <person name="Kim E."/>
            <person name="Taghavi S."/>
            <person name="Newman L."/>
            <person name="Vangronsveld J."/>
            <person name="van der Lelie D."/>
            <person name="Richardson P."/>
        </authorList>
    </citation>
    <scope>NUCLEOTIDE SEQUENCE [LARGE SCALE GENOMIC DNA]</scope>
    <source>
        <strain>568</strain>
    </source>
</reference>
<organism>
    <name type="scientific">Serratia proteamaculans (strain 568)</name>
    <dbReference type="NCBI Taxonomy" id="399741"/>
    <lineage>
        <taxon>Bacteria</taxon>
        <taxon>Pseudomonadati</taxon>
        <taxon>Pseudomonadota</taxon>
        <taxon>Gammaproteobacteria</taxon>
        <taxon>Enterobacterales</taxon>
        <taxon>Yersiniaceae</taxon>
        <taxon>Serratia</taxon>
    </lineage>
</organism>